<dbReference type="PIR" id="A54002">
    <property type="entry name" value="A54002"/>
</dbReference>
<dbReference type="Allergome" id="3354">
    <property type="allergen name" value="Lol p 11.0101"/>
</dbReference>
<dbReference type="Allergome" id="455">
    <property type="allergen name" value="Lol p 11"/>
</dbReference>
<dbReference type="GO" id="GO:0005615">
    <property type="term" value="C:extracellular space"/>
    <property type="evidence" value="ECO:0007669"/>
    <property type="project" value="InterPro"/>
</dbReference>
<dbReference type="InterPro" id="IPR006040">
    <property type="entry name" value="Allergen_Ole_e_I_CS"/>
</dbReference>
<dbReference type="InterPro" id="IPR006041">
    <property type="entry name" value="Pollen_Ole_e1_allergen"/>
</dbReference>
<dbReference type="PANTHER" id="PTHR31614:SF12">
    <property type="entry name" value="OS06G0556600 PROTEIN"/>
    <property type="match status" value="1"/>
</dbReference>
<dbReference type="PANTHER" id="PTHR31614">
    <property type="entry name" value="PROTEIN DOWNSTREAM OF FLC-RELATED"/>
    <property type="match status" value="1"/>
</dbReference>
<dbReference type="Pfam" id="PF01190">
    <property type="entry name" value="Pollen_Ole_e_1"/>
    <property type="match status" value="1"/>
</dbReference>
<dbReference type="PROSITE" id="PS00925">
    <property type="entry name" value="OLEEI"/>
    <property type="match status" value="1"/>
</dbReference>
<accession>Q7M1X5</accession>
<reference key="1">
    <citation type="journal article" date="1995" name="J. Allergy Clin. Immunol.">
        <title>Lol p XI, a new major grass pollen allergen, is a member of a family of soybean trypsin inhibitor-related proteins.</title>
        <authorList>
            <person name="van Ree R."/>
            <person name="Hoffman D.R."/>
            <person name="van Dijk W."/>
            <person name="Brodard V."/>
            <person name="Mahieu K."/>
            <person name="Koeleman C.A."/>
            <person name="Grande M."/>
            <person name="van Leeuwen W.A."/>
            <person name="Aalberse R.C."/>
        </authorList>
    </citation>
    <scope>PROTEIN SEQUENCE</scope>
    <source>
        <tissue>Pollen</tissue>
    </source>
</reference>
<comment type="subcellular location">
    <subcellularLocation>
        <location>Secreted</location>
    </subcellularLocation>
</comment>
<comment type="allergen">
    <text>Causes an allergic reaction in human. Binds to IgE.</text>
</comment>
<comment type="similarity">
    <text evidence="2">Belongs to the Ole e I family.</text>
</comment>
<protein>
    <recommendedName>
        <fullName>Major pollen allergen Lol p 11</fullName>
    </recommendedName>
    <alternativeName>
        <fullName>Allergen Lol p XI</fullName>
    </alternativeName>
    <allergenName>Lol p 11</allergenName>
</protein>
<evidence type="ECO:0000250" key="1"/>
<evidence type="ECO:0000305" key="2"/>
<sequence length="134" mass="14869">DKGPGFVVTGRVYCDPCRAGFETNVSHNVEGATVAVDCRPFDGGESKLKAEATTDKDGWYKIEIDQDHQEEICEVVLAKSPDKSCSEIEEFRDRARVPLTSNXGIKQQGIRYANPIAFFRKEPLKECGGILQAY</sequence>
<proteinExistence type="evidence at protein level"/>
<keyword id="KW-0020">Allergen</keyword>
<keyword id="KW-0903">Direct protein sequencing</keyword>
<keyword id="KW-1015">Disulfide bond</keyword>
<keyword id="KW-0325">Glycoprotein</keyword>
<keyword id="KW-0964">Secreted</keyword>
<name>LOLB_LOLPR</name>
<organism>
    <name type="scientific">Lolium perenne</name>
    <name type="common">Perennial ryegrass</name>
    <dbReference type="NCBI Taxonomy" id="4522"/>
    <lineage>
        <taxon>Eukaryota</taxon>
        <taxon>Viridiplantae</taxon>
        <taxon>Streptophyta</taxon>
        <taxon>Embryophyta</taxon>
        <taxon>Tracheophyta</taxon>
        <taxon>Spermatophyta</taxon>
        <taxon>Magnoliopsida</taxon>
        <taxon>Liliopsida</taxon>
        <taxon>Poales</taxon>
        <taxon>Poaceae</taxon>
        <taxon>BOP clade</taxon>
        <taxon>Pooideae</taxon>
        <taxon>Poodae</taxon>
        <taxon>Poeae</taxon>
        <taxon>Poeae Chloroplast Group 2 (Poeae type)</taxon>
        <taxon>Loliodinae</taxon>
        <taxon>Loliinae</taxon>
        <taxon>Lolium</taxon>
    </lineage>
</organism>
<feature type="chain" id="PRO_0000215115" description="Major pollen allergen Lol p 11">
    <location>
        <begin position="1"/>
        <end position="134"/>
    </location>
</feature>
<feature type="glycosylation site" description="N-linked (GlcNAc...) asparagine">
    <location>
        <position position="24"/>
    </location>
</feature>
<feature type="disulfide bond" evidence="1">
    <location>
        <begin position="14"/>
        <end position="85"/>
    </location>
</feature>
<feature type="disulfide bond" evidence="1">
    <location>
        <begin position="17"/>
        <end position="127"/>
    </location>
</feature>
<feature type="disulfide bond" evidence="1">
    <location>
        <begin position="38"/>
        <end position="73"/>
    </location>
</feature>